<reference key="1">
    <citation type="submission" date="2008-10" db="EMBL/GenBank/DDBJ databases">
        <title>Genome sequence of Bacillus anthracis str. CDC 684.</title>
        <authorList>
            <person name="Dodson R.J."/>
            <person name="Munk A.C."/>
            <person name="Brettin T."/>
            <person name="Bruce D."/>
            <person name="Detter C."/>
            <person name="Tapia R."/>
            <person name="Han C."/>
            <person name="Sutton G."/>
            <person name="Sims D."/>
        </authorList>
    </citation>
    <scope>NUCLEOTIDE SEQUENCE [LARGE SCALE GENOMIC DNA]</scope>
    <source>
        <strain>CDC 684 / NRRL 3495</strain>
    </source>
</reference>
<proteinExistence type="inferred from homology"/>
<sequence length="368" mass="41626">MSILEKVQPIETMLPERYYTMSTEDMEKRVREIKEKMGETLFIPGHHYQKDEVVQFSDAAGDSLQLAQVAASNKEAKYIVFCGVHFMAETADMLTTDEQVVILPDMRAGCSMADMADIEQTERAWEELTKLFGDTMIPLTYVNSTAAIKAFCGRNGGATVTSSNAKQMVSWAFTQKERLVFLPDQHLGRNTAYDLGIPLDKMAVWDPHTDSLEYDGDIEEIQVILWKGHCSVHQNFTVKNIENVRKNHPDMNIIVHPECCYEVVAASDYAGSTKYIIDMIESAPSGSKWAIGTEMNLVNRIIQQHPDKEIVSLNPFMCPCLTMNRIDLPHLLWALETIERGEEINVISVDKQVTEEAVLALNRMLERV</sequence>
<gene>
    <name evidence="1" type="primary">nadA</name>
    <name type="ordered locus">BAMEG_4694</name>
</gene>
<keyword id="KW-0004">4Fe-4S</keyword>
<keyword id="KW-0963">Cytoplasm</keyword>
<keyword id="KW-0408">Iron</keyword>
<keyword id="KW-0411">Iron-sulfur</keyword>
<keyword id="KW-0479">Metal-binding</keyword>
<keyword id="KW-0662">Pyridine nucleotide biosynthesis</keyword>
<keyword id="KW-0808">Transferase</keyword>
<dbReference type="EC" id="2.5.1.72" evidence="1"/>
<dbReference type="EMBL" id="CP001215">
    <property type="protein sequence ID" value="ACP17058.1"/>
    <property type="molecule type" value="Genomic_DNA"/>
</dbReference>
<dbReference type="RefSeq" id="WP_000025290.1">
    <property type="nucleotide sequence ID" value="NC_012581.1"/>
</dbReference>
<dbReference type="SMR" id="C3L6V9"/>
<dbReference type="GeneID" id="45024301"/>
<dbReference type="KEGG" id="bah:BAMEG_4694"/>
<dbReference type="HOGENOM" id="CLU_047382_2_0_9"/>
<dbReference type="UniPathway" id="UPA00253">
    <property type="reaction ID" value="UER00327"/>
</dbReference>
<dbReference type="GO" id="GO:0005829">
    <property type="term" value="C:cytosol"/>
    <property type="evidence" value="ECO:0007669"/>
    <property type="project" value="TreeGrafter"/>
</dbReference>
<dbReference type="GO" id="GO:0051539">
    <property type="term" value="F:4 iron, 4 sulfur cluster binding"/>
    <property type="evidence" value="ECO:0007669"/>
    <property type="project" value="UniProtKB-KW"/>
</dbReference>
<dbReference type="GO" id="GO:0046872">
    <property type="term" value="F:metal ion binding"/>
    <property type="evidence" value="ECO:0007669"/>
    <property type="project" value="UniProtKB-KW"/>
</dbReference>
<dbReference type="GO" id="GO:0008987">
    <property type="term" value="F:quinolinate synthetase A activity"/>
    <property type="evidence" value="ECO:0007669"/>
    <property type="project" value="UniProtKB-UniRule"/>
</dbReference>
<dbReference type="GO" id="GO:0034628">
    <property type="term" value="P:'de novo' NAD biosynthetic process from L-aspartate"/>
    <property type="evidence" value="ECO:0007669"/>
    <property type="project" value="TreeGrafter"/>
</dbReference>
<dbReference type="FunFam" id="3.40.50.10800:FF:000001">
    <property type="entry name" value="Quinolinate synthase A"/>
    <property type="match status" value="1"/>
</dbReference>
<dbReference type="Gene3D" id="3.40.50.10800">
    <property type="entry name" value="NadA-like"/>
    <property type="match status" value="3"/>
</dbReference>
<dbReference type="HAMAP" id="MF_00569">
    <property type="entry name" value="NadA_type3"/>
    <property type="match status" value="1"/>
</dbReference>
<dbReference type="InterPro" id="IPR003473">
    <property type="entry name" value="NadA"/>
</dbReference>
<dbReference type="InterPro" id="IPR036094">
    <property type="entry name" value="NadA_sf"/>
</dbReference>
<dbReference type="InterPro" id="IPR023515">
    <property type="entry name" value="Quinolinate_synth_A_type3"/>
</dbReference>
<dbReference type="NCBIfam" id="TIGR00550">
    <property type="entry name" value="nadA"/>
    <property type="match status" value="1"/>
</dbReference>
<dbReference type="NCBIfam" id="NF006880">
    <property type="entry name" value="PRK09375.2-1"/>
    <property type="match status" value="1"/>
</dbReference>
<dbReference type="NCBIfam" id="NF006883">
    <property type="entry name" value="PRK09375.2-4"/>
    <property type="match status" value="1"/>
</dbReference>
<dbReference type="PANTHER" id="PTHR30573:SF0">
    <property type="entry name" value="QUINOLINATE SYNTHASE, CHLOROPLASTIC"/>
    <property type="match status" value="1"/>
</dbReference>
<dbReference type="PANTHER" id="PTHR30573">
    <property type="entry name" value="QUINOLINATE SYNTHETASE A"/>
    <property type="match status" value="1"/>
</dbReference>
<dbReference type="Pfam" id="PF02445">
    <property type="entry name" value="NadA"/>
    <property type="match status" value="1"/>
</dbReference>
<dbReference type="SUPFAM" id="SSF142754">
    <property type="entry name" value="NadA-like"/>
    <property type="match status" value="1"/>
</dbReference>
<evidence type="ECO:0000255" key="1">
    <source>
        <dbReference type="HAMAP-Rule" id="MF_00569"/>
    </source>
</evidence>
<comment type="function">
    <text evidence="1">Catalyzes the condensation of iminoaspartate with dihydroxyacetone phosphate to form quinolinate.</text>
</comment>
<comment type="catalytic activity">
    <reaction evidence="1">
        <text>iminosuccinate + dihydroxyacetone phosphate = quinolinate + phosphate + 2 H2O + H(+)</text>
        <dbReference type="Rhea" id="RHEA:25888"/>
        <dbReference type="ChEBI" id="CHEBI:15377"/>
        <dbReference type="ChEBI" id="CHEBI:15378"/>
        <dbReference type="ChEBI" id="CHEBI:29959"/>
        <dbReference type="ChEBI" id="CHEBI:43474"/>
        <dbReference type="ChEBI" id="CHEBI:57642"/>
        <dbReference type="ChEBI" id="CHEBI:77875"/>
        <dbReference type="EC" id="2.5.1.72"/>
    </reaction>
    <physiologicalReaction direction="left-to-right" evidence="1">
        <dbReference type="Rhea" id="RHEA:25889"/>
    </physiologicalReaction>
</comment>
<comment type="cofactor">
    <cofactor evidence="1">
        <name>[4Fe-4S] cluster</name>
        <dbReference type="ChEBI" id="CHEBI:49883"/>
    </cofactor>
    <text evidence="1">Binds 1 [4Fe-4S] cluster per subunit.</text>
</comment>
<comment type="pathway">
    <text evidence="1">Cofactor biosynthesis; NAD(+) biosynthesis; quinolinate from iminoaspartate: step 1/1.</text>
</comment>
<comment type="subcellular location">
    <subcellularLocation>
        <location evidence="1">Cytoplasm</location>
    </subcellularLocation>
</comment>
<comment type="similarity">
    <text evidence="1">Belongs to the quinolinate synthase family. Type 3 subfamily.</text>
</comment>
<name>NADA_BACAC</name>
<feature type="chain" id="PRO_1000146821" description="Quinolinate synthase">
    <location>
        <begin position="1"/>
        <end position="368"/>
    </location>
</feature>
<feature type="binding site" evidence="1">
    <location>
        <position position="46"/>
    </location>
    <ligand>
        <name>iminosuccinate</name>
        <dbReference type="ChEBI" id="CHEBI:77875"/>
    </ligand>
</feature>
<feature type="binding site" evidence="1">
    <location>
        <position position="63"/>
    </location>
    <ligand>
        <name>iminosuccinate</name>
        <dbReference type="ChEBI" id="CHEBI:77875"/>
    </ligand>
</feature>
<feature type="binding site" evidence="1">
    <location>
        <position position="110"/>
    </location>
    <ligand>
        <name>[4Fe-4S] cluster</name>
        <dbReference type="ChEBI" id="CHEBI:49883"/>
    </ligand>
</feature>
<feature type="binding site" evidence="1">
    <location>
        <begin position="141"/>
        <end position="143"/>
    </location>
    <ligand>
        <name>iminosuccinate</name>
        <dbReference type="ChEBI" id="CHEBI:77875"/>
    </ligand>
</feature>
<feature type="binding site" evidence="1">
    <location>
        <position position="162"/>
    </location>
    <ligand>
        <name>iminosuccinate</name>
        <dbReference type="ChEBI" id="CHEBI:77875"/>
    </ligand>
</feature>
<feature type="binding site" evidence="1">
    <location>
        <position position="230"/>
    </location>
    <ligand>
        <name>[4Fe-4S] cluster</name>
        <dbReference type="ChEBI" id="CHEBI:49883"/>
    </ligand>
</feature>
<feature type="binding site" evidence="1">
    <location>
        <begin position="256"/>
        <end position="258"/>
    </location>
    <ligand>
        <name>iminosuccinate</name>
        <dbReference type="ChEBI" id="CHEBI:77875"/>
    </ligand>
</feature>
<feature type="binding site" evidence="1">
    <location>
        <position position="273"/>
    </location>
    <ligand>
        <name>iminosuccinate</name>
        <dbReference type="ChEBI" id="CHEBI:77875"/>
    </ligand>
</feature>
<feature type="binding site" evidence="1">
    <location>
        <position position="320"/>
    </location>
    <ligand>
        <name>[4Fe-4S] cluster</name>
        <dbReference type="ChEBI" id="CHEBI:49883"/>
    </ligand>
</feature>
<accession>C3L6V9</accession>
<protein>
    <recommendedName>
        <fullName evidence="1">Quinolinate synthase</fullName>
        <ecNumber evidence="1">2.5.1.72</ecNumber>
    </recommendedName>
</protein>
<organism>
    <name type="scientific">Bacillus anthracis (strain CDC 684 / NRRL 3495)</name>
    <dbReference type="NCBI Taxonomy" id="568206"/>
    <lineage>
        <taxon>Bacteria</taxon>
        <taxon>Bacillati</taxon>
        <taxon>Bacillota</taxon>
        <taxon>Bacilli</taxon>
        <taxon>Bacillales</taxon>
        <taxon>Bacillaceae</taxon>
        <taxon>Bacillus</taxon>
        <taxon>Bacillus cereus group</taxon>
    </lineage>
</organism>